<keyword id="KW-1015">Disulfide bond</keyword>
<keyword id="KW-0528">Neurotoxin</keyword>
<keyword id="KW-0964">Secreted</keyword>
<keyword id="KW-0732">Signal</keyword>
<keyword id="KW-0800">Toxin</keyword>
<comment type="function">
    <text evidence="1">This protein markedly relaxes the rat carbachol-precontracted anococcygeus muscle. This relaxation is inhibited by the inhibitor of nitric oxide (NO) synthase, N-nitro-L-arginine methyl ester (L-NAME), suggesting that the response induced by this protein is NO-mediated (By similarity).</text>
</comment>
<comment type="subcellular location">
    <subcellularLocation>
        <location evidence="1">Secreted</location>
    </subcellularLocation>
</comment>
<comment type="tissue specificity">
    <text>Expressed by the venom gland.</text>
</comment>
<comment type="domain">
    <text evidence="3">Has the structural arrangement of an alpha-helix connected to antiparallel beta-sheets by disulfide bonds (CS-alpha/beta).</text>
</comment>
<comment type="similarity">
    <text evidence="3">Belongs to the long (4 C-C) scorpion toxin superfamily. Sodium channel inhibitor family. Alpha subfamily.</text>
</comment>
<dbReference type="SMR" id="P59853"/>
<dbReference type="TCDB" id="8.B.1.1.2">
    <property type="family name" value="the long (4c-c) scorpion toxin (l-st) superfamily"/>
</dbReference>
<dbReference type="GO" id="GO:0005576">
    <property type="term" value="C:extracellular region"/>
    <property type="evidence" value="ECO:0007669"/>
    <property type="project" value="UniProtKB-SubCell"/>
</dbReference>
<dbReference type="GO" id="GO:0019871">
    <property type="term" value="F:sodium channel inhibitor activity"/>
    <property type="evidence" value="ECO:0007669"/>
    <property type="project" value="InterPro"/>
</dbReference>
<dbReference type="GO" id="GO:0090729">
    <property type="term" value="F:toxin activity"/>
    <property type="evidence" value="ECO:0007669"/>
    <property type="project" value="UniProtKB-KW"/>
</dbReference>
<dbReference type="GO" id="GO:0006952">
    <property type="term" value="P:defense response"/>
    <property type="evidence" value="ECO:0007669"/>
    <property type="project" value="InterPro"/>
</dbReference>
<dbReference type="CDD" id="cd23106">
    <property type="entry name" value="neurotoxins_LC_scorpion"/>
    <property type="match status" value="1"/>
</dbReference>
<dbReference type="FunFam" id="3.30.30.10:FF:000002">
    <property type="entry name" value="Alpha-like toxin BmK-M1"/>
    <property type="match status" value="1"/>
</dbReference>
<dbReference type="Gene3D" id="3.30.30.10">
    <property type="entry name" value="Knottin, scorpion toxin-like"/>
    <property type="match status" value="1"/>
</dbReference>
<dbReference type="InterPro" id="IPR044062">
    <property type="entry name" value="LCN-type_CS_alpha_beta_dom"/>
</dbReference>
<dbReference type="InterPro" id="IPR003614">
    <property type="entry name" value="Scorpion_toxin-like"/>
</dbReference>
<dbReference type="InterPro" id="IPR036574">
    <property type="entry name" value="Scorpion_toxin-like_sf"/>
</dbReference>
<dbReference type="InterPro" id="IPR018218">
    <property type="entry name" value="Scorpion_toxinL"/>
</dbReference>
<dbReference type="InterPro" id="IPR002061">
    <property type="entry name" value="Scorpion_toxinL/defensin"/>
</dbReference>
<dbReference type="Pfam" id="PF00537">
    <property type="entry name" value="Toxin_3"/>
    <property type="match status" value="1"/>
</dbReference>
<dbReference type="PRINTS" id="PR00285">
    <property type="entry name" value="SCORPNTOXIN"/>
</dbReference>
<dbReference type="SMART" id="SM00505">
    <property type="entry name" value="Knot1"/>
    <property type="match status" value="1"/>
</dbReference>
<dbReference type="SUPFAM" id="SSF57095">
    <property type="entry name" value="Scorpion toxin-like"/>
    <property type="match status" value="1"/>
</dbReference>
<dbReference type="PROSITE" id="PS51863">
    <property type="entry name" value="LCN_CSAB"/>
    <property type="match status" value="1"/>
</dbReference>
<feature type="signal peptide" evidence="1">
    <location>
        <begin position="1"/>
        <end position="19"/>
    </location>
</feature>
<feature type="chain" id="PRO_0000035261" description="Makatoxin-3">
    <location>
        <begin position="20"/>
        <end position="83"/>
    </location>
</feature>
<feature type="domain" description="LCN-type CS-alpha/beta" evidence="2">
    <location>
        <begin position="21"/>
        <end position="83"/>
    </location>
</feature>
<feature type="disulfide bond" evidence="2">
    <location>
        <begin position="31"/>
        <end position="82"/>
    </location>
</feature>
<feature type="disulfide bond" evidence="2">
    <location>
        <begin position="35"/>
        <end position="55"/>
    </location>
</feature>
<feature type="disulfide bond" evidence="2">
    <location>
        <begin position="41"/>
        <end position="65"/>
    </location>
</feature>
<feature type="disulfide bond" evidence="2">
    <location>
        <begin position="45"/>
        <end position="67"/>
    </location>
</feature>
<evidence type="ECO:0000250" key="1"/>
<evidence type="ECO:0000255" key="2">
    <source>
        <dbReference type="PROSITE-ProRule" id="PRU01210"/>
    </source>
</evidence>
<evidence type="ECO:0000305" key="3"/>
<sequence>MNYLIVISFALLLMTGVESGRDAYIAKKENCTYFCALNPYCNDLCTKNGAKSGYCQWAGRYGNACWCIDLPDKVPIRIPGPCIGR</sequence>
<protein>
    <recommendedName>
        <fullName>Makatoxin-3</fullName>
    </recommendedName>
    <alternativeName>
        <fullName>Makatoxin III</fullName>
        <shortName>MKTXIII</shortName>
        <shortName>MakatxIII</shortName>
        <shortName>MkTx III</shortName>
    </alternativeName>
</protein>
<name>MKTX3_OLIMR</name>
<reference key="1">
    <citation type="journal article" date="2001" name="Toxicon">
        <title>Molecular cloning and sequence analysis of cDNAs encoding a beta-toxin-like peptide and two MkTx I homologues from scorpion Buthus martensii Karsch.</title>
        <authorList>
            <person name="Zeng X.-C."/>
            <person name="Li W.-X."/>
            <person name="Zhu S.-Y."/>
            <person name="Peng F."/>
            <person name="Zhu Z.-H."/>
            <person name="Liu H."/>
            <person name="Mao X."/>
        </authorList>
    </citation>
    <scope>NUCLEOTIDE SEQUENCE [MRNA]</scope>
    <source>
        <tissue>Venom gland</tissue>
    </source>
</reference>
<organism>
    <name type="scientific">Olivierus martensii</name>
    <name type="common">Manchurian scorpion</name>
    <name type="synonym">Mesobuthus martensii</name>
    <dbReference type="NCBI Taxonomy" id="34649"/>
    <lineage>
        <taxon>Eukaryota</taxon>
        <taxon>Metazoa</taxon>
        <taxon>Ecdysozoa</taxon>
        <taxon>Arthropoda</taxon>
        <taxon>Chelicerata</taxon>
        <taxon>Arachnida</taxon>
        <taxon>Scorpiones</taxon>
        <taxon>Buthida</taxon>
        <taxon>Buthoidea</taxon>
        <taxon>Buthidae</taxon>
        <taxon>Olivierus</taxon>
    </lineage>
</organism>
<proteinExistence type="evidence at transcript level"/>
<accession>P59853</accession>